<accession>B1VPA3</accession>
<organism>
    <name type="scientific">Streptomyces griseus subsp. griseus (strain JCM 4626 / CBS 651.72 / NBRC 13350 / KCC S-0626 / ISP 5235)</name>
    <dbReference type="NCBI Taxonomy" id="455632"/>
    <lineage>
        <taxon>Bacteria</taxon>
        <taxon>Bacillati</taxon>
        <taxon>Actinomycetota</taxon>
        <taxon>Actinomycetes</taxon>
        <taxon>Kitasatosporales</taxon>
        <taxon>Streptomycetaceae</taxon>
        <taxon>Streptomyces</taxon>
    </lineage>
</organism>
<gene>
    <name evidence="1" type="primary">thiC</name>
    <name type="ordered locus">SGR_3653</name>
</gene>
<feature type="chain" id="PRO_1000093237" description="Phosphomethylpyrimidine synthase">
    <location>
        <begin position="1"/>
        <end position="606"/>
    </location>
</feature>
<feature type="region of interest" description="Disordered" evidence="2">
    <location>
        <begin position="1"/>
        <end position="49"/>
    </location>
</feature>
<feature type="region of interest" description="Disordered" evidence="2">
    <location>
        <begin position="105"/>
        <end position="147"/>
    </location>
</feature>
<feature type="compositionally biased region" description="Polar residues" evidence="2">
    <location>
        <begin position="1"/>
        <end position="13"/>
    </location>
</feature>
<feature type="compositionally biased region" description="Low complexity" evidence="2">
    <location>
        <begin position="14"/>
        <end position="31"/>
    </location>
</feature>
<feature type="compositionally biased region" description="Basic and acidic residues" evidence="2">
    <location>
        <begin position="105"/>
        <end position="117"/>
    </location>
</feature>
<feature type="binding site" evidence="1">
    <location>
        <position position="213"/>
    </location>
    <ligand>
        <name>substrate</name>
    </ligand>
</feature>
<feature type="binding site" evidence="1">
    <location>
        <position position="242"/>
    </location>
    <ligand>
        <name>substrate</name>
    </ligand>
</feature>
<feature type="binding site" evidence="1">
    <location>
        <position position="271"/>
    </location>
    <ligand>
        <name>substrate</name>
    </ligand>
</feature>
<feature type="binding site" evidence="1">
    <location>
        <position position="307"/>
    </location>
    <ligand>
        <name>substrate</name>
    </ligand>
</feature>
<feature type="binding site" evidence="1">
    <location>
        <begin position="327"/>
        <end position="329"/>
    </location>
    <ligand>
        <name>substrate</name>
    </ligand>
</feature>
<feature type="binding site" evidence="1">
    <location>
        <begin position="368"/>
        <end position="371"/>
    </location>
    <ligand>
        <name>substrate</name>
    </ligand>
</feature>
<feature type="binding site" evidence="1">
    <location>
        <position position="407"/>
    </location>
    <ligand>
        <name>substrate</name>
    </ligand>
</feature>
<feature type="binding site" evidence="1">
    <location>
        <position position="411"/>
    </location>
    <ligand>
        <name>Zn(2+)</name>
        <dbReference type="ChEBI" id="CHEBI:29105"/>
    </ligand>
</feature>
<feature type="binding site" evidence="1">
    <location>
        <position position="434"/>
    </location>
    <ligand>
        <name>substrate</name>
    </ligand>
</feature>
<feature type="binding site" evidence="1">
    <location>
        <position position="475"/>
    </location>
    <ligand>
        <name>Zn(2+)</name>
        <dbReference type="ChEBI" id="CHEBI:29105"/>
    </ligand>
</feature>
<feature type="binding site" evidence="1">
    <location>
        <position position="555"/>
    </location>
    <ligand>
        <name>[4Fe-4S] cluster</name>
        <dbReference type="ChEBI" id="CHEBI:49883"/>
        <note>4Fe-4S-S-AdoMet</note>
    </ligand>
</feature>
<feature type="binding site" evidence="1">
    <location>
        <position position="558"/>
    </location>
    <ligand>
        <name>[4Fe-4S] cluster</name>
        <dbReference type="ChEBI" id="CHEBI:49883"/>
        <note>4Fe-4S-S-AdoMet</note>
    </ligand>
</feature>
<feature type="binding site" evidence="1">
    <location>
        <position position="563"/>
    </location>
    <ligand>
        <name>[4Fe-4S] cluster</name>
        <dbReference type="ChEBI" id="CHEBI:49883"/>
        <note>4Fe-4S-S-AdoMet</note>
    </ligand>
</feature>
<proteinExistence type="inferred from homology"/>
<comment type="function">
    <text evidence="1">Catalyzes the synthesis of the hydroxymethylpyrimidine phosphate (HMP-P) moiety of thiamine from aminoimidazole ribotide (AIR) in a radical S-adenosyl-L-methionine (SAM)-dependent reaction.</text>
</comment>
<comment type="catalytic activity">
    <reaction evidence="1">
        <text>5-amino-1-(5-phospho-beta-D-ribosyl)imidazole + S-adenosyl-L-methionine = 4-amino-2-methyl-5-(phosphooxymethyl)pyrimidine + CO + 5'-deoxyadenosine + formate + L-methionine + 3 H(+)</text>
        <dbReference type="Rhea" id="RHEA:24840"/>
        <dbReference type="ChEBI" id="CHEBI:15378"/>
        <dbReference type="ChEBI" id="CHEBI:15740"/>
        <dbReference type="ChEBI" id="CHEBI:17245"/>
        <dbReference type="ChEBI" id="CHEBI:17319"/>
        <dbReference type="ChEBI" id="CHEBI:57844"/>
        <dbReference type="ChEBI" id="CHEBI:58354"/>
        <dbReference type="ChEBI" id="CHEBI:59789"/>
        <dbReference type="ChEBI" id="CHEBI:137981"/>
        <dbReference type="EC" id="4.1.99.17"/>
    </reaction>
</comment>
<comment type="cofactor">
    <cofactor evidence="1">
        <name>[4Fe-4S] cluster</name>
        <dbReference type="ChEBI" id="CHEBI:49883"/>
    </cofactor>
    <text evidence="1">Binds 1 [4Fe-4S] cluster per subunit. The cluster is coordinated with 3 cysteines and an exchangeable S-adenosyl-L-methionine.</text>
</comment>
<comment type="pathway">
    <text evidence="1">Cofactor biosynthesis; thiamine diphosphate biosynthesis.</text>
</comment>
<comment type="similarity">
    <text evidence="1">Belongs to the ThiC family.</text>
</comment>
<sequence length="606" mass="66987">MTTADARTPASKQNDGTPDGTTPDAGTPNDGAGKSIGWHKGYVQGSRPDLRVPVRQVHLTNGKHVTLYDTSGPYTDASVDTDVRRGLAPLRENWIIARGDTEEYAGRPVRPEDDGLKHTSPRGGLRNLDAVFPGRPRQPRRSRDGRPVTQLAYARRGEVTPEMEYVAIRENVEAEVVREEIAAGRAVLPANVNHPEIEPMIIGKRFLVKVNANIGNSAVTSSIEEEVDKMTWATQWGADTVMDLSTGRNIHTTREWVLRNSPVPIGTVPLYQALEKVDGRAEELTWEIYKDTVIEQAEQGVDYMTVHAGVRLPYVPLTARRKTGIVSRGGSIMAAWCLAHHKESFLYEHFEELCEILATYDVTYSLGDGLRPGSIADANDEAQFAELRTLGELNTVAKRFGVQTMIEGPGHVPMHKIKENIDLQQEICEEAPFYTLGPLTTDVAPAYDHITSGIGAAMIAWWGTAMLCYVTPKEHLGLPNRDDVKTGVITYKIAAHAADLAKGHPGAQEWDDALSDARFEFRWEDQFNLALDPDTAREFHDETLPAEPAKTAHFCSMCGPKFCSMKISQDIRRQHGGSREEIEEGMAEKSKEFAAAGNRVYLPIAD</sequence>
<dbReference type="EC" id="4.1.99.17" evidence="1"/>
<dbReference type="EMBL" id="AP009493">
    <property type="protein sequence ID" value="BAG20482.1"/>
    <property type="molecule type" value="Genomic_DNA"/>
</dbReference>
<dbReference type="RefSeq" id="WP_012380060.1">
    <property type="nucleotide sequence ID" value="NC_010572.1"/>
</dbReference>
<dbReference type="SMR" id="B1VPA3"/>
<dbReference type="KEGG" id="sgr:SGR_3653"/>
<dbReference type="PATRIC" id="fig|455632.4.peg.3721"/>
<dbReference type="eggNOG" id="COG0422">
    <property type="taxonomic scope" value="Bacteria"/>
</dbReference>
<dbReference type="HOGENOM" id="CLU_013181_2_1_11"/>
<dbReference type="UniPathway" id="UPA00060"/>
<dbReference type="Proteomes" id="UP000001685">
    <property type="component" value="Chromosome"/>
</dbReference>
<dbReference type="GO" id="GO:0005829">
    <property type="term" value="C:cytosol"/>
    <property type="evidence" value="ECO:0007669"/>
    <property type="project" value="TreeGrafter"/>
</dbReference>
<dbReference type="GO" id="GO:0051539">
    <property type="term" value="F:4 iron, 4 sulfur cluster binding"/>
    <property type="evidence" value="ECO:0007669"/>
    <property type="project" value="UniProtKB-KW"/>
</dbReference>
<dbReference type="GO" id="GO:0016830">
    <property type="term" value="F:carbon-carbon lyase activity"/>
    <property type="evidence" value="ECO:0007669"/>
    <property type="project" value="InterPro"/>
</dbReference>
<dbReference type="GO" id="GO:0008270">
    <property type="term" value="F:zinc ion binding"/>
    <property type="evidence" value="ECO:0007669"/>
    <property type="project" value="UniProtKB-UniRule"/>
</dbReference>
<dbReference type="GO" id="GO:0009228">
    <property type="term" value="P:thiamine biosynthetic process"/>
    <property type="evidence" value="ECO:0007669"/>
    <property type="project" value="UniProtKB-KW"/>
</dbReference>
<dbReference type="GO" id="GO:0009229">
    <property type="term" value="P:thiamine diphosphate biosynthetic process"/>
    <property type="evidence" value="ECO:0007669"/>
    <property type="project" value="UniProtKB-UniRule"/>
</dbReference>
<dbReference type="FunFam" id="3.20.20.540:FF:000001">
    <property type="entry name" value="Phosphomethylpyrimidine synthase"/>
    <property type="match status" value="1"/>
</dbReference>
<dbReference type="Gene3D" id="6.10.250.620">
    <property type="match status" value="1"/>
</dbReference>
<dbReference type="Gene3D" id="3.20.20.540">
    <property type="entry name" value="Radical SAM ThiC family, central domain"/>
    <property type="match status" value="1"/>
</dbReference>
<dbReference type="HAMAP" id="MF_00089">
    <property type="entry name" value="ThiC"/>
    <property type="match status" value="1"/>
</dbReference>
<dbReference type="InterPro" id="IPR037509">
    <property type="entry name" value="ThiC"/>
</dbReference>
<dbReference type="InterPro" id="IPR025747">
    <property type="entry name" value="ThiC-associated_dom"/>
</dbReference>
<dbReference type="InterPro" id="IPR038521">
    <property type="entry name" value="ThiC/Bza_core_dom"/>
</dbReference>
<dbReference type="InterPro" id="IPR002817">
    <property type="entry name" value="ThiC/BzaA/B"/>
</dbReference>
<dbReference type="NCBIfam" id="NF006763">
    <property type="entry name" value="PRK09284.1"/>
    <property type="match status" value="1"/>
</dbReference>
<dbReference type="NCBIfam" id="NF009895">
    <property type="entry name" value="PRK13352.1"/>
    <property type="match status" value="1"/>
</dbReference>
<dbReference type="NCBIfam" id="TIGR00190">
    <property type="entry name" value="thiC"/>
    <property type="match status" value="1"/>
</dbReference>
<dbReference type="PANTHER" id="PTHR30557:SF1">
    <property type="entry name" value="PHOSPHOMETHYLPYRIMIDINE SYNTHASE, CHLOROPLASTIC"/>
    <property type="match status" value="1"/>
</dbReference>
<dbReference type="PANTHER" id="PTHR30557">
    <property type="entry name" value="THIAMINE BIOSYNTHESIS PROTEIN THIC"/>
    <property type="match status" value="1"/>
</dbReference>
<dbReference type="Pfam" id="PF13667">
    <property type="entry name" value="ThiC-associated"/>
    <property type="match status" value="1"/>
</dbReference>
<dbReference type="Pfam" id="PF01964">
    <property type="entry name" value="ThiC_Rad_SAM"/>
    <property type="match status" value="1"/>
</dbReference>
<dbReference type="SFLD" id="SFLDF00407">
    <property type="entry name" value="phosphomethylpyrimidine_syntha"/>
    <property type="match status" value="1"/>
</dbReference>
<dbReference type="SFLD" id="SFLDG01114">
    <property type="entry name" value="phosphomethylpyrimidine_syntha"/>
    <property type="match status" value="1"/>
</dbReference>
<dbReference type="SFLD" id="SFLDS00113">
    <property type="entry name" value="Radical_SAM_Phosphomethylpyrim"/>
    <property type="match status" value="1"/>
</dbReference>
<keyword id="KW-0004">4Fe-4S</keyword>
<keyword id="KW-0408">Iron</keyword>
<keyword id="KW-0411">Iron-sulfur</keyword>
<keyword id="KW-0456">Lyase</keyword>
<keyword id="KW-0479">Metal-binding</keyword>
<keyword id="KW-0949">S-adenosyl-L-methionine</keyword>
<keyword id="KW-0784">Thiamine biosynthesis</keyword>
<keyword id="KW-0862">Zinc</keyword>
<name>THIC_STRGG</name>
<protein>
    <recommendedName>
        <fullName evidence="1">Phosphomethylpyrimidine synthase</fullName>
        <ecNumber evidence="1">4.1.99.17</ecNumber>
    </recommendedName>
    <alternativeName>
        <fullName evidence="1">Hydroxymethylpyrimidine phosphate synthase</fullName>
        <shortName evidence="1">HMP-P synthase</shortName>
        <shortName evidence="1">HMP-phosphate synthase</shortName>
        <shortName evidence="1">HMPP synthase</shortName>
    </alternativeName>
    <alternativeName>
        <fullName evidence="1">Thiamine biosynthesis protein ThiC</fullName>
    </alternativeName>
</protein>
<evidence type="ECO:0000255" key="1">
    <source>
        <dbReference type="HAMAP-Rule" id="MF_00089"/>
    </source>
</evidence>
<evidence type="ECO:0000256" key="2">
    <source>
        <dbReference type="SAM" id="MobiDB-lite"/>
    </source>
</evidence>
<reference key="1">
    <citation type="journal article" date="2008" name="J. Bacteriol.">
        <title>Genome sequence of the streptomycin-producing microorganism Streptomyces griseus IFO 13350.</title>
        <authorList>
            <person name="Ohnishi Y."/>
            <person name="Ishikawa J."/>
            <person name="Hara H."/>
            <person name="Suzuki H."/>
            <person name="Ikenoya M."/>
            <person name="Ikeda H."/>
            <person name="Yamashita A."/>
            <person name="Hattori M."/>
            <person name="Horinouchi S."/>
        </authorList>
    </citation>
    <scope>NUCLEOTIDE SEQUENCE [LARGE SCALE GENOMIC DNA]</scope>
    <source>
        <strain>JCM 4626 / CBS 651.72 / NBRC 13350 / KCC S-0626 / ISP 5235</strain>
    </source>
</reference>